<accession>A8I4S6</accession>
<feature type="chain" id="PRO_1000072875" description="Urease accessory protein UreE">
    <location>
        <begin position="1"/>
        <end position="208"/>
    </location>
</feature>
<feature type="region of interest" description="Disordered" evidence="2">
    <location>
        <begin position="145"/>
        <end position="195"/>
    </location>
</feature>
<dbReference type="EMBL" id="AP009384">
    <property type="protein sequence ID" value="BAF87765.1"/>
    <property type="molecule type" value="Genomic_DNA"/>
</dbReference>
<dbReference type="RefSeq" id="WP_012170295.1">
    <property type="nucleotide sequence ID" value="NC_009937.1"/>
</dbReference>
<dbReference type="SMR" id="A8I4S6"/>
<dbReference type="STRING" id="438753.AZC_1767"/>
<dbReference type="KEGG" id="azc:AZC_1767"/>
<dbReference type="eggNOG" id="COG2371">
    <property type="taxonomic scope" value="Bacteria"/>
</dbReference>
<dbReference type="HOGENOM" id="CLU_093757_1_0_5"/>
<dbReference type="Proteomes" id="UP000000270">
    <property type="component" value="Chromosome"/>
</dbReference>
<dbReference type="GO" id="GO:0005737">
    <property type="term" value="C:cytoplasm"/>
    <property type="evidence" value="ECO:0007669"/>
    <property type="project" value="UniProtKB-SubCell"/>
</dbReference>
<dbReference type="GO" id="GO:0016151">
    <property type="term" value="F:nickel cation binding"/>
    <property type="evidence" value="ECO:0007669"/>
    <property type="project" value="UniProtKB-UniRule"/>
</dbReference>
<dbReference type="GO" id="GO:0051082">
    <property type="term" value="F:unfolded protein binding"/>
    <property type="evidence" value="ECO:0007669"/>
    <property type="project" value="UniProtKB-UniRule"/>
</dbReference>
<dbReference type="GO" id="GO:0006457">
    <property type="term" value="P:protein folding"/>
    <property type="evidence" value="ECO:0007669"/>
    <property type="project" value="InterPro"/>
</dbReference>
<dbReference type="GO" id="GO:0065003">
    <property type="term" value="P:protein-containing complex assembly"/>
    <property type="evidence" value="ECO:0007669"/>
    <property type="project" value="InterPro"/>
</dbReference>
<dbReference type="GO" id="GO:0019627">
    <property type="term" value="P:urea metabolic process"/>
    <property type="evidence" value="ECO:0007669"/>
    <property type="project" value="InterPro"/>
</dbReference>
<dbReference type="CDD" id="cd00571">
    <property type="entry name" value="UreE"/>
    <property type="match status" value="1"/>
</dbReference>
<dbReference type="Gene3D" id="2.60.260.20">
    <property type="entry name" value="Urease metallochaperone UreE, N-terminal domain"/>
    <property type="match status" value="1"/>
</dbReference>
<dbReference type="Gene3D" id="3.30.70.790">
    <property type="entry name" value="UreE, C-terminal domain"/>
    <property type="match status" value="1"/>
</dbReference>
<dbReference type="HAMAP" id="MF_00822">
    <property type="entry name" value="UreE"/>
    <property type="match status" value="1"/>
</dbReference>
<dbReference type="InterPro" id="IPR012406">
    <property type="entry name" value="UreE"/>
</dbReference>
<dbReference type="InterPro" id="IPR007864">
    <property type="entry name" value="UreE_C_dom"/>
</dbReference>
<dbReference type="InterPro" id="IPR004029">
    <property type="entry name" value="UreE_N"/>
</dbReference>
<dbReference type="InterPro" id="IPR036118">
    <property type="entry name" value="UreE_N_sf"/>
</dbReference>
<dbReference type="NCBIfam" id="NF009751">
    <property type="entry name" value="PRK13261.1-1"/>
    <property type="match status" value="1"/>
</dbReference>
<dbReference type="Pfam" id="PF05194">
    <property type="entry name" value="UreE_C"/>
    <property type="match status" value="1"/>
</dbReference>
<dbReference type="Pfam" id="PF02814">
    <property type="entry name" value="UreE_N"/>
    <property type="match status" value="1"/>
</dbReference>
<dbReference type="SMART" id="SM00988">
    <property type="entry name" value="UreE_N"/>
    <property type="match status" value="1"/>
</dbReference>
<dbReference type="SUPFAM" id="SSF69737">
    <property type="entry name" value="Urease metallochaperone UreE, C-terminal domain"/>
    <property type="match status" value="1"/>
</dbReference>
<dbReference type="SUPFAM" id="SSF69287">
    <property type="entry name" value="Urease metallochaperone UreE, N-terminal domain"/>
    <property type="match status" value="1"/>
</dbReference>
<organism>
    <name type="scientific">Azorhizobium caulinodans (strain ATCC 43989 / DSM 5975 / JCM 20966 / LMG 6465 / NBRC 14845 / NCIMB 13405 / ORS 571)</name>
    <dbReference type="NCBI Taxonomy" id="438753"/>
    <lineage>
        <taxon>Bacteria</taxon>
        <taxon>Pseudomonadati</taxon>
        <taxon>Pseudomonadota</taxon>
        <taxon>Alphaproteobacteria</taxon>
        <taxon>Hyphomicrobiales</taxon>
        <taxon>Xanthobacteraceae</taxon>
        <taxon>Azorhizobium</taxon>
    </lineage>
</organism>
<keyword id="KW-0143">Chaperone</keyword>
<keyword id="KW-0963">Cytoplasm</keyword>
<keyword id="KW-0533">Nickel</keyword>
<keyword id="KW-0996">Nickel insertion</keyword>
<keyword id="KW-1185">Reference proteome</keyword>
<proteinExistence type="inferred from homology"/>
<sequence>MIRSTKIVRHLAVRPDRVVDTITLDHHARHRRRVAMTADGGLEFLLDLDRAAVLDHGDALELEDGRLVQVKAADEQLVEITTFNPVRLMRAAWHIGNRHIPAEITEEAIYIVQDPVLEAMLRGLGAAVKPVVRPFKPERGAYEAAEAHGHGQAHAHDHHDHDHHDHGHDHAHHDHAHHDHAHDHHGHDHAHDHAHGASCGCGHTHHHD</sequence>
<comment type="function">
    <text evidence="1">Involved in urease metallocenter assembly. Binds nickel. Probably functions as a nickel donor during metallocenter assembly.</text>
</comment>
<comment type="subcellular location">
    <subcellularLocation>
        <location evidence="1">Cytoplasm</location>
    </subcellularLocation>
</comment>
<comment type="similarity">
    <text evidence="1">Belongs to the UreE family.</text>
</comment>
<gene>
    <name evidence="1" type="primary">ureE</name>
    <name type="ordered locus">AZC_1767</name>
</gene>
<reference key="1">
    <citation type="submission" date="2007-04" db="EMBL/GenBank/DDBJ databases">
        <title>Complete genome sequence of the nitrogen-fixing bacterium Azorhizobium caulinodans ORS571.</title>
        <authorList>
            <person name="Lee K.B."/>
            <person name="Backer P.D."/>
            <person name="Aono T."/>
            <person name="Liu C.T."/>
            <person name="Suzuki S."/>
            <person name="Suzuki T."/>
            <person name="Kaneko T."/>
            <person name="Yamada M."/>
            <person name="Tabata S."/>
            <person name="Kupfer D.M."/>
            <person name="Najar F.Z."/>
            <person name="Wiley G.B."/>
            <person name="Roe B."/>
            <person name="Binnewies T."/>
            <person name="Ussery D."/>
            <person name="Vereecke D."/>
            <person name="Gevers D."/>
            <person name="Holsters M."/>
            <person name="Oyaizu H."/>
        </authorList>
    </citation>
    <scope>NUCLEOTIDE SEQUENCE [LARGE SCALE GENOMIC DNA]</scope>
    <source>
        <strain>ATCC 43989 / DSM 5975 / JCM 20966 / LMG 6465 / NBRC 14845 / NCIMB 13405 / ORS 571</strain>
    </source>
</reference>
<protein>
    <recommendedName>
        <fullName evidence="1">Urease accessory protein UreE</fullName>
    </recommendedName>
</protein>
<evidence type="ECO:0000255" key="1">
    <source>
        <dbReference type="HAMAP-Rule" id="MF_00822"/>
    </source>
</evidence>
<evidence type="ECO:0000256" key="2">
    <source>
        <dbReference type="SAM" id="MobiDB-lite"/>
    </source>
</evidence>
<name>UREE_AZOC5</name>